<sequence>MKPAGTDPRILSLAAEVAKSPEQNVPVILLKLKEIINNTPLGSSELKKVKQDIYCYDLIQYCLLVLSQDSSRIQGGWSTISQLTQILSHCCVGLEPGEDGEEFYKELLPSAAENFLILGRRLQTCFINATKGEEQDKLLHFFQIVTDSLFWLLGGHVQLIQNVLQSDHFLHLLQTDNVQIGASVMTLLQNILQINSGNLLKIEGKALHSILDEILFKLLSTPSPVIRSTATKLLLVLAESHQEILILLRLSACYKGLRSLLNKQETLTEFSRELRQLVDLLTPKIHQEVEEQKLHKAACLIQAYWKGFQTRKRLKKLPSAVIALQRSFRSKRTKMMLELNRQKEEEDLRLKLQLQRQRAMRLSRESRLNMLEIIHPGQVEKYNREMEEKSALTIQKHWRGYRERKNFRQQRPSLTEYKAAVTLQRAVLKFLAKCRKKKKLFASWHGLQELTDARRVELKQQVDDYVKRHPCSQMSEAASRELHAQAQERLQHYFMGRAIEERAQQHREALMAQISTNIEQLMKAPSLKEAEGKEPEQFLSRSRPVAAKAKQAHLTTLKHIQAPWWKKLGEEPGDEVDVPKDELSIDLGMLFIGGTKPP</sequence>
<protein>
    <recommendedName>
        <fullName>IQ calmodulin-binding motif-containing protein 1</fullName>
    </recommendedName>
</protein>
<name>IQCB1_MOUSE</name>
<organism>
    <name type="scientific">Mus musculus</name>
    <name type="common">Mouse</name>
    <dbReference type="NCBI Taxonomy" id="10090"/>
    <lineage>
        <taxon>Eukaryota</taxon>
        <taxon>Metazoa</taxon>
        <taxon>Chordata</taxon>
        <taxon>Craniata</taxon>
        <taxon>Vertebrata</taxon>
        <taxon>Euteleostomi</taxon>
        <taxon>Mammalia</taxon>
        <taxon>Eutheria</taxon>
        <taxon>Euarchontoglires</taxon>
        <taxon>Glires</taxon>
        <taxon>Rodentia</taxon>
        <taxon>Myomorpha</taxon>
        <taxon>Muroidea</taxon>
        <taxon>Muridae</taxon>
        <taxon>Murinae</taxon>
        <taxon>Mus</taxon>
        <taxon>Mus</taxon>
    </lineage>
</organism>
<keyword id="KW-0025">Alternative splicing</keyword>
<keyword id="KW-0112">Calmodulin-binding</keyword>
<keyword id="KW-0970">Cilium biogenesis/degradation</keyword>
<keyword id="KW-0175">Coiled coil</keyword>
<keyword id="KW-0963">Cytoplasm</keyword>
<keyword id="KW-0206">Cytoskeleton</keyword>
<keyword id="KW-1185">Reference proteome</keyword>
<keyword id="KW-0677">Repeat</keyword>
<evidence type="ECO:0000250" key="1">
    <source>
        <dbReference type="UniProtKB" id="Q15051"/>
    </source>
</evidence>
<evidence type="ECO:0000255" key="2"/>
<evidence type="ECO:0000255" key="3">
    <source>
        <dbReference type="PROSITE-ProRule" id="PRU00116"/>
    </source>
</evidence>
<evidence type="ECO:0000269" key="4">
    <source>
    </source>
</evidence>
<evidence type="ECO:0000269" key="5">
    <source>
    </source>
</evidence>
<evidence type="ECO:0000303" key="6">
    <source>
    </source>
</evidence>
<evidence type="ECO:0000305" key="7"/>
<dbReference type="EMBL" id="AK078554">
    <property type="protein sequence ID" value="BAC37333.1"/>
    <property type="molecule type" value="mRNA"/>
</dbReference>
<dbReference type="EMBL" id="AK165220">
    <property type="protein sequence ID" value="BAE38084.1"/>
    <property type="molecule type" value="mRNA"/>
</dbReference>
<dbReference type="EMBL" id="BC029084">
    <property type="protein sequence ID" value="AAH29084.1"/>
    <property type="molecule type" value="mRNA"/>
</dbReference>
<dbReference type="CCDS" id="CCDS28157.1">
    <molecule id="Q8BP00-1"/>
</dbReference>
<dbReference type="RefSeq" id="NP_796102.2">
    <molecule id="Q8BP00-1"/>
    <property type="nucleotide sequence ID" value="NM_177128.4"/>
</dbReference>
<dbReference type="RefSeq" id="XP_006522310.1">
    <molecule id="Q8BP00-1"/>
    <property type="nucleotide sequence ID" value="XM_006522247.4"/>
</dbReference>
<dbReference type="RefSeq" id="XP_006522311.1">
    <molecule id="Q8BP00-1"/>
    <property type="nucleotide sequence ID" value="XM_006522248.3"/>
</dbReference>
<dbReference type="RefSeq" id="XP_006522312.1">
    <molecule id="Q8BP00-1"/>
    <property type="nucleotide sequence ID" value="XM_006522249.4"/>
</dbReference>
<dbReference type="RefSeq" id="XP_030105013.1">
    <molecule id="Q8BP00-1"/>
    <property type="nucleotide sequence ID" value="XM_030249153.2"/>
</dbReference>
<dbReference type="RefSeq" id="XP_036015878.1">
    <molecule id="Q8BP00-1"/>
    <property type="nucleotide sequence ID" value="XM_036159985.1"/>
</dbReference>
<dbReference type="SMR" id="Q8BP00"/>
<dbReference type="BioGRID" id="235913">
    <property type="interactions" value="168"/>
</dbReference>
<dbReference type="CORUM" id="Q8BP00"/>
<dbReference type="FunCoup" id="Q8BP00">
    <property type="interactions" value="1656"/>
</dbReference>
<dbReference type="IntAct" id="Q8BP00">
    <property type="interactions" value="135"/>
</dbReference>
<dbReference type="MINT" id="Q8BP00"/>
<dbReference type="STRING" id="10090.ENSMUSP00000023535"/>
<dbReference type="iPTMnet" id="Q8BP00"/>
<dbReference type="PhosphoSitePlus" id="Q8BP00"/>
<dbReference type="SwissPalm" id="Q8BP00"/>
<dbReference type="PaxDb" id="10090-ENSMUSP00000023535"/>
<dbReference type="PeptideAtlas" id="Q8BP00"/>
<dbReference type="ProteomicsDB" id="301664">
    <molecule id="Q8BP00-1"/>
</dbReference>
<dbReference type="ProteomicsDB" id="301665">
    <molecule id="Q8BP00-2"/>
</dbReference>
<dbReference type="Pumba" id="Q8BP00"/>
<dbReference type="Antibodypedia" id="32846">
    <property type="antibodies" value="190 antibodies from 28 providers"/>
</dbReference>
<dbReference type="Ensembl" id="ENSMUST00000023535.4">
    <molecule id="Q8BP00-1"/>
    <property type="protein sequence ID" value="ENSMUSP00000023535.4"/>
    <property type="gene ID" value="ENSMUSG00000022837.15"/>
</dbReference>
<dbReference type="Ensembl" id="ENSMUST00000114819.8">
    <molecule id="Q8BP00-2"/>
    <property type="protein sequence ID" value="ENSMUSP00000110467.2"/>
    <property type="gene ID" value="ENSMUSG00000022837.15"/>
</dbReference>
<dbReference type="GeneID" id="320299"/>
<dbReference type="KEGG" id="mmu:320299"/>
<dbReference type="UCSC" id="uc007zda.1">
    <molecule id="Q8BP00-2"/>
    <property type="organism name" value="mouse"/>
</dbReference>
<dbReference type="UCSC" id="uc007zdb.2">
    <molecule id="Q8BP00-1"/>
    <property type="organism name" value="mouse"/>
</dbReference>
<dbReference type="AGR" id="MGI:2443764"/>
<dbReference type="CTD" id="9657"/>
<dbReference type="MGI" id="MGI:2443764">
    <property type="gene designation" value="Iqcb1"/>
</dbReference>
<dbReference type="VEuPathDB" id="HostDB:ENSMUSG00000022837"/>
<dbReference type="eggNOG" id="KOG0160">
    <property type="taxonomic scope" value="Eukaryota"/>
</dbReference>
<dbReference type="GeneTree" id="ENSGT00390000002188"/>
<dbReference type="HOGENOM" id="CLU_035387_0_0_1"/>
<dbReference type="InParanoid" id="Q8BP00"/>
<dbReference type="OMA" id="DDYIRLH"/>
<dbReference type="OrthoDB" id="8178106at2759"/>
<dbReference type="PhylomeDB" id="Q8BP00"/>
<dbReference type="TreeFam" id="TF351884"/>
<dbReference type="Reactome" id="R-MMU-5620912">
    <property type="pathway name" value="Anchoring of the basal body to the plasma membrane"/>
</dbReference>
<dbReference type="BioGRID-ORCS" id="320299">
    <property type="hits" value="1 hit in 77 CRISPR screens"/>
</dbReference>
<dbReference type="ChiTaRS" id="Iqcb1">
    <property type="organism name" value="mouse"/>
</dbReference>
<dbReference type="PRO" id="PR:Q8BP00"/>
<dbReference type="Proteomes" id="UP000000589">
    <property type="component" value="Chromosome 16"/>
</dbReference>
<dbReference type="RNAct" id="Q8BP00">
    <property type="molecule type" value="protein"/>
</dbReference>
<dbReference type="Bgee" id="ENSMUSG00000022837">
    <property type="expression patterns" value="Expressed in retinal neural layer and 218 other cell types or tissues"/>
</dbReference>
<dbReference type="GO" id="GO:0005813">
    <property type="term" value="C:centrosome"/>
    <property type="evidence" value="ECO:0007669"/>
    <property type="project" value="UniProtKB-SubCell"/>
</dbReference>
<dbReference type="GO" id="GO:0005737">
    <property type="term" value="C:cytoplasm"/>
    <property type="evidence" value="ECO:0007669"/>
    <property type="project" value="UniProtKB-KW"/>
</dbReference>
<dbReference type="GO" id="GO:0032391">
    <property type="term" value="C:photoreceptor connecting cilium"/>
    <property type="evidence" value="ECO:0000314"/>
    <property type="project" value="HGNC-UCL"/>
</dbReference>
<dbReference type="GO" id="GO:0001750">
    <property type="term" value="C:photoreceptor outer segment"/>
    <property type="evidence" value="ECO:0000314"/>
    <property type="project" value="HGNC-UCL"/>
</dbReference>
<dbReference type="GO" id="GO:0062063">
    <property type="term" value="F:BBSome binding"/>
    <property type="evidence" value="ECO:0007669"/>
    <property type="project" value="Ensembl"/>
</dbReference>
<dbReference type="GO" id="GO:0005516">
    <property type="term" value="F:calmodulin binding"/>
    <property type="evidence" value="ECO:0000250"/>
    <property type="project" value="HGNC-UCL"/>
</dbReference>
<dbReference type="GO" id="GO:0019899">
    <property type="term" value="F:enzyme binding"/>
    <property type="evidence" value="ECO:0007669"/>
    <property type="project" value="Ensembl"/>
</dbReference>
<dbReference type="GO" id="GO:0030674">
    <property type="term" value="F:protein-macromolecule adaptor activity"/>
    <property type="evidence" value="ECO:0007669"/>
    <property type="project" value="Ensembl"/>
</dbReference>
<dbReference type="GO" id="GO:0060271">
    <property type="term" value="P:cilium assembly"/>
    <property type="evidence" value="ECO:0000315"/>
    <property type="project" value="UniProtKB"/>
</dbReference>
<dbReference type="GO" id="GO:0061824">
    <property type="term" value="P:cytosolic ciliogenesis"/>
    <property type="evidence" value="ECO:0007669"/>
    <property type="project" value="Ensembl"/>
</dbReference>
<dbReference type="GO" id="GO:0048496">
    <property type="term" value="P:maintenance of animal organ identity"/>
    <property type="evidence" value="ECO:0000250"/>
    <property type="project" value="HGNC-UCL"/>
</dbReference>
<dbReference type="GO" id="GO:0045494">
    <property type="term" value="P:photoreceptor cell maintenance"/>
    <property type="evidence" value="ECO:0000250"/>
    <property type="project" value="HGNC-UCL"/>
</dbReference>
<dbReference type="CDD" id="cd23767">
    <property type="entry name" value="IQCD"/>
    <property type="match status" value="1"/>
</dbReference>
<dbReference type="FunFam" id="1.20.5.190:FF:000048">
    <property type="entry name" value="IQ motif containing B1"/>
    <property type="match status" value="1"/>
</dbReference>
<dbReference type="FunFam" id="1.20.5.190:FF:000058">
    <property type="entry name" value="IQ motif containing B1"/>
    <property type="match status" value="1"/>
</dbReference>
<dbReference type="Gene3D" id="1.20.5.190">
    <property type="match status" value="2"/>
</dbReference>
<dbReference type="InterPro" id="IPR016024">
    <property type="entry name" value="ARM-type_fold"/>
</dbReference>
<dbReference type="InterPro" id="IPR000048">
    <property type="entry name" value="IQ_motif_EF-hand-BS"/>
</dbReference>
<dbReference type="InterPro" id="IPR028765">
    <property type="entry name" value="IQCB1"/>
</dbReference>
<dbReference type="InterPro" id="IPR027417">
    <property type="entry name" value="P-loop_NTPase"/>
</dbReference>
<dbReference type="PANTHER" id="PTHR15673">
    <property type="entry name" value="IQ CALMODULIN-BINDING MOTIF CONTAINING PROTEIN 1"/>
    <property type="match status" value="1"/>
</dbReference>
<dbReference type="PANTHER" id="PTHR15673:SF2">
    <property type="entry name" value="IQ CALMODULIN-BINDING MOTIF-CONTAINING PROTEIN 1"/>
    <property type="match status" value="1"/>
</dbReference>
<dbReference type="Pfam" id="PF00612">
    <property type="entry name" value="IQ"/>
    <property type="match status" value="2"/>
</dbReference>
<dbReference type="SMART" id="SM00015">
    <property type="entry name" value="IQ"/>
    <property type="match status" value="2"/>
</dbReference>
<dbReference type="SUPFAM" id="SSF48371">
    <property type="entry name" value="ARM repeat"/>
    <property type="match status" value="1"/>
</dbReference>
<dbReference type="SUPFAM" id="SSF52540">
    <property type="entry name" value="P-loop containing nucleoside triphosphate hydrolases"/>
    <property type="match status" value="1"/>
</dbReference>
<dbReference type="PROSITE" id="PS50096">
    <property type="entry name" value="IQ"/>
    <property type="match status" value="2"/>
</dbReference>
<comment type="function">
    <text evidence="1 5">Involved in ciliogenesis. The function in an early step in cilia formation depends on its association with CEP290/NPHP6 (By similarity). Involved in regulation of the BBSome complex integrity, specifically for presence of BBS2 and BBS5 in the complex, and in ciliary targeting of selected BBSome cargos. May play a role in controlling entry of the BBSome complex to cilia possibly implicating CEP290/NPHP6 (By similarity).</text>
</comment>
<comment type="subunit">
    <text evidence="1 4 5">Interacts with calmodulin (PubMed:15723066). Interacts with CEP290/NPHP6; IQCB1/NPHP5 and CEP290/NPHP6; are proposed to form a functional NPHP5-6 module localized to the centrosome. Interacts with ATXN10. Interacts with NPHP1, INVS, NPHP4 and RPGRIP1L; these interactions likely require additional interactors (PubMed:21565611). Associates with the BBSome complex; interacts with BBS1, BBS2, BBS4, BBS5, BBS7, BBS8 and BBS9 (By similarity).</text>
</comment>
<comment type="interaction">
    <interactant intactId="EBI-4282243">
        <id>Q8BP00</id>
    </interactant>
    <interactant intactId="EBI-4284019">
        <id>P28658</id>
        <label>Atxn10</label>
    </interactant>
    <organismsDiffer>false</organismsDiffer>
    <experiments>2</experiments>
</comment>
<comment type="interaction">
    <interactant intactId="EBI-4282243">
        <id>Q8BP00</id>
    </interactant>
    <interactant intactId="EBI-1811999">
        <id>Q6A078</id>
        <label>Cep290</label>
    </interactant>
    <organismsDiffer>false</organismsDiffer>
    <experiments>6</experiments>
</comment>
<comment type="interaction">
    <interactant intactId="EBI-4282243">
        <id>Q8BP00</id>
    </interactant>
    <interactant intactId="EBI-4281337">
        <id>O89019</id>
        <label>Invs</label>
    </interactant>
    <organismsDiffer>false</organismsDiffer>
    <experiments>2</experiments>
</comment>
<comment type="interaction">
    <interactant intactId="EBI-4282243">
        <id>Q8BP00</id>
    </interactant>
    <interactant intactId="EBI-4281130">
        <id>Q8CG73</id>
        <label>Rpgrip1l</label>
    </interactant>
    <organismsDiffer>false</organismsDiffer>
    <experiments>2</experiments>
</comment>
<comment type="subcellular location">
    <subcellularLocation>
        <location evidence="1">Cytoplasm</location>
        <location evidence="1">Cytoskeleton</location>
        <location evidence="1">Microtubule organizing center</location>
        <location evidence="1">Centrosome</location>
    </subcellularLocation>
    <text evidence="1">Localization to the centrosome depends on the interaction with CEP290.</text>
</comment>
<comment type="alternative products">
    <event type="alternative splicing"/>
    <isoform>
        <id>Q8BP00-1</id>
        <name>1</name>
        <sequence type="displayed"/>
    </isoform>
    <isoform>
        <id>Q8BP00-2</id>
        <name>2</name>
        <sequence type="described" ref="VSP_010246"/>
    </isoform>
</comment>
<comment type="tissue specificity">
    <text evidence="4">Localized to the outer segment and connecting cilia of photoreceptor cells.</text>
</comment>
<comment type="domain">
    <text evidence="1">The IQ domains mediate the interaction with calmodulin.</text>
</comment>
<accession>Q8BP00</accession>
<accession>Q3TNK4</accession>
<accession>Q8K306</accession>
<proteinExistence type="evidence at protein level"/>
<gene>
    <name type="primary">Iqcb1</name>
    <name type="synonym">Kiaa0036</name>
</gene>
<reference key="1">
    <citation type="journal article" date="2005" name="Science">
        <title>The transcriptional landscape of the mammalian genome.</title>
        <authorList>
            <person name="Carninci P."/>
            <person name="Kasukawa T."/>
            <person name="Katayama S."/>
            <person name="Gough J."/>
            <person name="Frith M.C."/>
            <person name="Maeda N."/>
            <person name="Oyama R."/>
            <person name="Ravasi T."/>
            <person name="Lenhard B."/>
            <person name="Wells C."/>
            <person name="Kodzius R."/>
            <person name="Shimokawa K."/>
            <person name="Bajic V.B."/>
            <person name="Brenner S.E."/>
            <person name="Batalov S."/>
            <person name="Forrest A.R."/>
            <person name="Zavolan M."/>
            <person name="Davis M.J."/>
            <person name="Wilming L.G."/>
            <person name="Aidinis V."/>
            <person name="Allen J.E."/>
            <person name="Ambesi-Impiombato A."/>
            <person name="Apweiler R."/>
            <person name="Aturaliya R.N."/>
            <person name="Bailey T.L."/>
            <person name="Bansal M."/>
            <person name="Baxter L."/>
            <person name="Beisel K.W."/>
            <person name="Bersano T."/>
            <person name="Bono H."/>
            <person name="Chalk A.M."/>
            <person name="Chiu K.P."/>
            <person name="Choudhary V."/>
            <person name="Christoffels A."/>
            <person name="Clutterbuck D.R."/>
            <person name="Crowe M.L."/>
            <person name="Dalla E."/>
            <person name="Dalrymple B.P."/>
            <person name="de Bono B."/>
            <person name="Della Gatta G."/>
            <person name="di Bernardo D."/>
            <person name="Down T."/>
            <person name="Engstrom P."/>
            <person name="Fagiolini M."/>
            <person name="Faulkner G."/>
            <person name="Fletcher C.F."/>
            <person name="Fukushima T."/>
            <person name="Furuno M."/>
            <person name="Futaki S."/>
            <person name="Gariboldi M."/>
            <person name="Georgii-Hemming P."/>
            <person name="Gingeras T.R."/>
            <person name="Gojobori T."/>
            <person name="Green R.E."/>
            <person name="Gustincich S."/>
            <person name="Harbers M."/>
            <person name="Hayashi Y."/>
            <person name="Hensch T.K."/>
            <person name="Hirokawa N."/>
            <person name="Hill D."/>
            <person name="Huminiecki L."/>
            <person name="Iacono M."/>
            <person name="Ikeo K."/>
            <person name="Iwama A."/>
            <person name="Ishikawa T."/>
            <person name="Jakt M."/>
            <person name="Kanapin A."/>
            <person name="Katoh M."/>
            <person name="Kawasawa Y."/>
            <person name="Kelso J."/>
            <person name="Kitamura H."/>
            <person name="Kitano H."/>
            <person name="Kollias G."/>
            <person name="Krishnan S.P."/>
            <person name="Kruger A."/>
            <person name="Kummerfeld S.K."/>
            <person name="Kurochkin I.V."/>
            <person name="Lareau L.F."/>
            <person name="Lazarevic D."/>
            <person name="Lipovich L."/>
            <person name="Liu J."/>
            <person name="Liuni S."/>
            <person name="McWilliam S."/>
            <person name="Madan Babu M."/>
            <person name="Madera M."/>
            <person name="Marchionni L."/>
            <person name="Matsuda H."/>
            <person name="Matsuzawa S."/>
            <person name="Miki H."/>
            <person name="Mignone F."/>
            <person name="Miyake S."/>
            <person name="Morris K."/>
            <person name="Mottagui-Tabar S."/>
            <person name="Mulder N."/>
            <person name="Nakano N."/>
            <person name="Nakauchi H."/>
            <person name="Ng P."/>
            <person name="Nilsson R."/>
            <person name="Nishiguchi S."/>
            <person name="Nishikawa S."/>
            <person name="Nori F."/>
            <person name="Ohara O."/>
            <person name="Okazaki Y."/>
            <person name="Orlando V."/>
            <person name="Pang K.C."/>
            <person name="Pavan W.J."/>
            <person name="Pavesi G."/>
            <person name="Pesole G."/>
            <person name="Petrovsky N."/>
            <person name="Piazza S."/>
            <person name="Reed J."/>
            <person name="Reid J.F."/>
            <person name="Ring B.Z."/>
            <person name="Ringwald M."/>
            <person name="Rost B."/>
            <person name="Ruan Y."/>
            <person name="Salzberg S.L."/>
            <person name="Sandelin A."/>
            <person name="Schneider C."/>
            <person name="Schoenbach C."/>
            <person name="Sekiguchi K."/>
            <person name="Semple C.A."/>
            <person name="Seno S."/>
            <person name="Sessa L."/>
            <person name="Sheng Y."/>
            <person name="Shibata Y."/>
            <person name="Shimada H."/>
            <person name="Shimada K."/>
            <person name="Silva D."/>
            <person name="Sinclair B."/>
            <person name="Sperling S."/>
            <person name="Stupka E."/>
            <person name="Sugiura K."/>
            <person name="Sultana R."/>
            <person name="Takenaka Y."/>
            <person name="Taki K."/>
            <person name="Tammoja K."/>
            <person name="Tan S.L."/>
            <person name="Tang S."/>
            <person name="Taylor M.S."/>
            <person name="Tegner J."/>
            <person name="Teichmann S.A."/>
            <person name="Ueda H.R."/>
            <person name="van Nimwegen E."/>
            <person name="Verardo R."/>
            <person name="Wei C.L."/>
            <person name="Yagi K."/>
            <person name="Yamanishi H."/>
            <person name="Zabarovsky E."/>
            <person name="Zhu S."/>
            <person name="Zimmer A."/>
            <person name="Hide W."/>
            <person name="Bult C."/>
            <person name="Grimmond S.M."/>
            <person name="Teasdale R.D."/>
            <person name="Liu E.T."/>
            <person name="Brusic V."/>
            <person name="Quackenbush J."/>
            <person name="Wahlestedt C."/>
            <person name="Mattick J.S."/>
            <person name="Hume D.A."/>
            <person name="Kai C."/>
            <person name="Sasaki D."/>
            <person name="Tomaru Y."/>
            <person name="Fukuda S."/>
            <person name="Kanamori-Katayama M."/>
            <person name="Suzuki M."/>
            <person name="Aoki J."/>
            <person name="Arakawa T."/>
            <person name="Iida J."/>
            <person name="Imamura K."/>
            <person name="Itoh M."/>
            <person name="Kato T."/>
            <person name="Kawaji H."/>
            <person name="Kawagashira N."/>
            <person name="Kawashima T."/>
            <person name="Kojima M."/>
            <person name="Kondo S."/>
            <person name="Konno H."/>
            <person name="Nakano K."/>
            <person name="Ninomiya N."/>
            <person name="Nishio T."/>
            <person name="Okada M."/>
            <person name="Plessy C."/>
            <person name="Shibata K."/>
            <person name="Shiraki T."/>
            <person name="Suzuki S."/>
            <person name="Tagami M."/>
            <person name="Waki K."/>
            <person name="Watahiki A."/>
            <person name="Okamura-Oho Y."/>
            <person name="Suzuki H."/>
            <person name="Kawai J."/>
            <person name="Hayashizaki Y."/>
        </authorList>
    </citation>
    <scope>NUCLEOTIDE SEQUENCE [LARGE SCALE MRNA] (ISOFORM 1)</scope>
    <source>
        <strain>C57BL/6J</strain>
        <tissue>Ovary</tissue>
        <tissue>Spleen</tissue>
    </source>
</reference>
<reference key="2">
    <citation type="journal article" date="2004" name="Genome Res.">
        <title>The status, quality, and expansion of the NIH full-length cDNA project: the Mammalian Gene Collection (MGC).</title>
        <authorList>
            <consortium name="The MGC Project Team"/>
        </authorList>
    </citation>
    <scope>NUCLEOTIDE SEQUENCE [LARGE SCALE MRNA] (ISOFORM 2)</scope>
    <source>
        <tissue>Mammary cancer</tissue>
    </source>
</reference>
<reference key="3">
    <citation type="journal article" date="2005" name="Nat. Genet.">
        <title>Nephrocystin-5, a ciliary IQ domain protein, is mutated in Senior-Loken syndrome and interacts with RPGR and calmodulin.</title>
        <authorList>
            <person name="Otto E.A."/>
            <person name="Loeys B."/>
            <person name="Khanna H."/>
            <person name="Hellemans J."/>
            <person name="Sudbrak R."/>
            <person name="Fan S."/>
            <person name="Muerb U."/>
            <person name="O'Toole J.F."/>
            <person name="Helou J."/>
            <person name="Attanasio M."/>
            <person name="Utsch B."/>
            <person name="Sayer J.A."/>
            <person name="Lillo C."/>
            <person name="Jimeno D."/>
            <person name="Coucke P."/>
            <person name="De Paepe A."/>
            <person name="Reinhardt R."/>
            <person name="Klages S."/>
            <person name="Tsuda M."/>
            <person name="Kawakami I."/>
            <person name="Kusakabe T."/>
            <person name="Omran H."/>
            <person name="Imm A."/>
            <person name="Tippens M."/>
            <person name="Raymond P.A."/>
            <person name="Hill J."/>
            <person name="Beales P."/>
            <person name="He S."/>
            <person name="Kispert A."/>
            <person name="Margolis B."/>
            <person name="Williams D.S."/>
            <person name="Swaroop A."/>
            <person name="Hildebrandt F."/>
        </authorList>
    </citation>
    <scope>INTERACTION WITH CALMODULIN</scope>
    <scope>TISSUE SPECIFICITY</scope>
</reference>
<reference key="4">
    <citation type="journal article" date="2010" name="Cell">
        <title>A tissue-specific atlas of mouse protein phosphorylation and expression.</title>
        <authorList>
            <person name="Huttlin E.L."/>
            <person name="Jedrychowski M.P."/>
            <person name="Elias J.E."/>
            <person name="Goswami T."/>
            <person name="Rad R."/>
            <person name="Beausoleil S.A."/>
            <person name="Villen J."/>
            <person name="Haas W."/>
            <person name="Sowa M.E."/>
            <person name="Gygi S.P."/>
        </authorList>
    </citation>
    <scope>IDENTIFICATION BY MASS SPECTROMETRY [LARGE SCALE ANALYSIS]</scope>
    <source>
        <tissue>Testis</tissue>
    </source>
</reference>
<reference key="5">
    <citation type="journal article" date="2011" name="Cell">
        <title>Mapping the NPHP-JBTS-MKS protein network reveals ciliopathy disease genes and pathways.</title>
        <authorList>
            <person name="Sang L."/>
            <person name="Miller J.J."/>
            <person name="Corbit K.C."/>
            <person name="Giles R.H."/>
            <person name="Brauer M.J."/>
            <person name="Otto E.A."/>
            <person name="Baye L.M."/>
            <person name="Wen X."/>
            <person name="Scales S.J."/>
            <person name="Kwong M."/>
            <person name="Huntzicker E.G."/>
            <person name="Sfakianos M.K."/>
            <person name="Sandoval W."/>
            <person name="Bazan J.F."/>
            <person name="Kulkarni P."/>
            <person name="Garcia-Gonzalo F.R."/>
            <person name="Seol A.D."/>
            <person name="O'Toole J.F."/>
            <person name="Held S."/>
            <person name="Reutter H.M."/>
            <person name="Lane W.S."/>
            <person name="Rafiq M.A."/>
            <person name="Noor A."/>
            <person name="Ansar M."/>
            <person name="Devi A.R."/>
            <person name="Sheffield V.C."/>
            <person name="Slusarski D.C."/>
            <person name="Vincent J.B."/>
            <person name="Doherty D.A."/>
            <person name="Hildebrandt F."/>
            <person name="Reiter J.F."/>
            <person name="Jackson P.K."/>
        </authorList>
    </citation>
    <scope>SUBCELLULAR LOCATION</scope>
    <scope>INTERACTION WITH CEP290; NPHP1; INVS; NPHP4; RPGRIP1L AND ATXN10</scope>
</reference>
<feature type="chain" id="PRO_0000084226" description="IQ calmodulin-binding motif-containing protein 1">
    <location>
        <begin position="1"/>
        <end position="598"/>
    </location>
</feature>
<feature type="domain" description="IQ 1" evidence="3">
    <location>
        <begin position="294"/>
        <end position="317"/>
    </location>
</feature>
<feature type="domain" description="IQ 2" evidence="3">
    <location>
        <begin position="318"/>
        <end position="338"/>
    </location>
</feature>
<feature type="domain" description="IQ 3" evidence="3">
    <location>
        <begin position="387"/>
        <end position="416"/>
    </location>
</feature>
<feature type="domain" description="IQ 4" evidence="3">
    <location>
        <begin position="417"/>
        <end position="437"/>
    </location>
</feature>
<feature type="region of interest" description="Interaction with BBS1, BBS8 and BBS9" evidence="1">
    <location>
        <begin position="1"/>
        <end position="157"/>
    </location>
</feature>
<feature type="region of interest" description="Interaction with CEP290, BBS1, BBS2, BBS4, BBS5, BBS7, BBS8 and BBS9" evidence="1">
    <location>
        <begin position="287"/>
        <end position="598"/>
    </location>
</feature>
<feature type="region of interest" description="Interaction with BBS1, BBS2, BBS4, BBS7, BBS8 and BBS9" evidence="1">
    <location>
        <begin position="530"/>
        <end position="598"/>
    </location>
</feature>
<feature type="coiled-coil region" evidence="2">
    <location>
        <begin position="336"/>
        <end position="362"/>
    </location>
</feature>
<feature type="splice variant" id="VSP_010246" description="In isoform 2." evidence="6">
    <original>KAPSLKEAEGKEPEQFLSRSRPVAAKAKQAHLTTLKHIQAPWWKKLGEEPGDEVDVPKDELSIDLGMLFIGGTKPP</original>
    <variation>SMLYLHPCFINGIPLARDVASKLFRRKVPQVVFIQVLGKSYIIPVFNSIPSVCACYKFKYFSFIKITNFKEVIIF</variation>
    <location>
        <begin position="523"/>
        <end position="598"/>
    </location>
</feature>
<feature type="sequence conflict" description="In Ref. 1; BAC37333." evidence="7" ref="1">
    <original>A</original>
    <variation>P</variation>
    <location>
        <position position="4"/>
    </location>
</feature>
<feature type="sequence conflict" description="In Ref. 1; BAC37333." evidence="7" ref="1">
    <original>R</original>
    <variation>G</variation>
    <location>
        <position position="9"/>
    </location>
</feature>
<feature type="sequence conflict" description="In Ref. 1; BAC37333." evidence="7" ref="1">
    <original>K</original>
    <variation>R</variation>
    <location>
        <position position="19"/>
    </location>
</feature>
<feature type="sequence conflict" description="In Ref. 1; BAC37333." evidence="7" ref="1">
    <original>L</original>
    <variation>V</variation>
    <location>
        <position position="32"/>
    </location>
</feature>
<feature type="sequence conflict" description="In Ref. 1; BAC37333." evidence="7" ref="1">
    <original>L</original>
    <variation>W</variation>
    <location>
        <position position="352"/>
    </location>
</feature>